<comment type="function">
    <text evidence="1">Bidirectionally degrades single-stranded DNA into large acid-insoluble oligonucleotides, which are then degraded further into small acid-soluble oligonucleotides.</text>
</comment>
<comment type="catalytic activity">
    <reaction evidence="1">
        <text>Exonucleolytic cleavage in either 5'- to 3'- or 3'- to 5'-direction to yield nucleoside 5'-phosphates.</text>
        <dbReference type="EC" id="3.1.11.6"/>
    </reaction>
</comment>
<comment type="subunit">
    <text evidence="1">Heterooligomer composed of large and small subunits.</text>
</comment>
<comment type="subcellular location">
    <subcellularLocation>
        <location evidence="1">Cytoplasm</location>
    </subcellularLocation>
</comment>
<comment type="similarity">
    <text evidence="1">Belongs to the XseA family.</text>
</comment>
<organism>
    <name type="scientific">Nostoc sp. (strain PCC 7120 / SAG 25.82 / UTEX 2576)</name>
    <dbReference type="NCBI Taxonomy" id="103690"/>
    <lineage>
        <taxon>Bacteria</taxon>
        <taxon>Bacillati</taxon>
        <taxon>Cyanobacteriota</taxon>
        <taxon>Cyanophyceae</taxon>
        <taxon>Nostocales</taxon>
        <taxon>Nostocaceae</taxon>
        <taxon>Nostoc</taxon>
    </lineage>
</organism>
<protein>
    <recommendedName>
        <fullName evidence="1">Exodeoxyribonuclease 7 large subunit</fullName>
        <ecNumber evidence="1">3.1.11.6</ecNumber>
    </recommendedName>
    <alternativeName>
        <fullName evidence="1">Exodeoxyribonuclease VII large subunit</fullName>
        <shortName evidence="1">Exonuclease VII large subunit</shortName>
    </alternativeName>
</protein>
<reference key="1">
    <citation type="journal article" date="2001" name="DNA Res.">
        <title>Complete genomic sequence of the filamentous nitrogen-fixing cyanobacterium Anabaena sp. strain PCC 7120.</title>
        <authorList>
            <person name="Kaneko T."/>
            <person name="Nakamura Y."/>
            <person name="Wolk C.P."/>
            <person name="Kuritz T."/>
            <person name="Sasamoto S."/>
            <person name="Watanabe A."/>
            <person name="Iriguchi M."/>
            <person name="Ishikawa A."/>
            <person name="Kawashima K."/>
            <person name="Kimura T."/>
            <person name="Kishida Y."/>
            <person name="Kohara M."/>
            <person name="Matsumoto M."/>
            <person name="Matsuno A."/>
            <person name="Muraki A."/>
            <person name="Nakazaki N."/>
            <person name="Shimpo S."/>
            <person name="Sugimoto M."/>
            <person name="Takazawa M."/>
            <person name="Yamada M."/>
            <person name="Yasuda M."/>
            <person name="Tabata S."/>
        </authorList>
    </citation>
    <scope>NUCLEOTIDE SEQUENCE [LARGE SCALE GENOMIC DNA]</scope>
    <source>
        <strain>PCC 7120 / SAG 25.82 / UTEX 2576</strain>
    </source>
</reference>
<keyword id="KW-0963">Cytoplasm</keyword>
<keyword id="KW-0269">Exonuclease</keyword>
<keyword id="KW-0378">Hydrolase</keyword>
<keyword id="KW-0540">Nuclease</keyword>
<keyword id="KW-1185">Reference proteome</keyword>
<dbReference type="EC" id="3.1.11.6" evidence="1"/>
<dbReference type="EMBL" id="BA000019">
    <property type="protein sequence ID" value="BAB73473.1"/>
    <property type="molecule type" value="Genomic_DNA"/>
</dbReference>
<dbReference type="PIR" id="AH2027">
    <property type="entry name" value="AH2027"/>
</dbReference>
<dbReference type="RefSeq" id="WP_010995942.1">
    <property type="nucleotide sequence ID" value="NZ_RSCN01000019.1"/>
</dbReference>
<dbReference type="SMR" id="Q8YW42"/>
<dbReference type="STRING" id="103690.gene:10493792"/>
<dbReference type="KEGG" id="ana:all1774"/>
<dbReference type="eggNOG" id="COG1570">
    <property type="taxonomic scope" value="Bacteria"/>
</dbReference>
<dbReference type="OrthoDB" id="9802795at2"/>
<dbReference type="Proteomes" id="UP000002483">
    <property type="component" value="Chromosome"/>
</dbReference>
<dbReference type="GO" id="GO:0005737">
    <property type="term" value="C:cytoplasm"/>
    <property type="evidence" value="ECO:0007669"/>
    <property type="project" value="UniProtKB-SubCell"/>
</dbReference>
<dbReference type="GO" id="GO:0009318">
    <property type="term" value="C:exodeoxyribonuclease VII complex"/>
    <property type="evidence" value="ECO:0007669"/>
    <property type="project" value="InterPro"/>
</dbReference>
<dbReference type="GO" id="GO:0008855">
    <property type="term" value="F:exodeoxyribonuclease VII activity"/>
    <property type="evidence" value="ECO:0007669"/>
    <property type="project" value="UniProtKB-UniRule"/>
</dbReference>
<dbReference type="GO" id="GO:0003676">
    <property type="term" value="F:nucleic acid binding"/>
    <property type="evidence" value="ECO:0007669"/>
    <property type="project" value="InterPro"/>
</dbReference>
<dbReference type="GO" id="GO:0006308">
    <property type="term" value="P:DNA catabolic process"/>
    <property type="evidence" value="ECO:0007669"/>
    <property type="project" value="UniProtKB-UniRule"/>
</dbReference>
<dbReference type="CDD" id="cd04489">
    <property type="entry name" value="ExoVII_LU_OBF"/>
    <property type="match status" value="1"/>
</dbReference>
<dbReference type="HAMAP" id="MF_00378">
    <property type="entry name" value="Exonuc_7_L"/>
    <property type="match status" value="1"/>
</dbReference>
<dbReference type="InterPro" id="IPR003753">
    <property type="entry name" value="Exonuc_VII_L"/>
</dbReference>
<dbReference type="InterPro" id="IPR020579">
    <property type="entry name" value="Exonuc_VII_lsu_C"/>
</dbReference>
<dbReference type="InterPro" id="IPR025824">
    <property type="entry name" value="OB-fold_nuc-bd_dom"/>
</dbReference>
<dbReference type="NCBIfam" id="TIGR00237">
    <property type="entry name" value="xseA"/>
    <property type="match status" value="1"/>
</dbReference>
<dbReference type="PANTHER" id="PTHR30008">
    <property type="entry name" value="EXODEOXYRIBONUCLEASE 7 LARGE SUBUNIT"/>
    <property type="match status" value="1"/>
</dbReference>
<dbReference type="PANTHER" id="PTHR30008:SF0">
    <property type="entry name" value="EXODEOXYRIBONUCLEASE 7 LARGE SUBUNIT"/>
    <property type="match status" value="1"/>
</dbReference>
<dbReference type="Pfam" id="PF02601">
    <property type="entry name" value="Exonuc_VII_L"/>
    <property type="match status" value="2"/>
</dbReference>
<dbReference type="Pfam" id="PF13742">
    <property type="entry name" value="tRNA_anti_2"/>
    <property type="match status" value="1"/>
</dbReference>
<evidence type="ECO:0000255" key="1">
    <source>
        <dbReference type="HAMAP-Rule" id="MF_00378"/>
    </source>
</evidence>
<name>EX7L_NOSS1</name>
<proteinExistence type="inferred from homology"/>
<feature type="chain" id="PRO_0000197826" description="Exodeoxyribonuclease 7 large subunit">
    <location>
        <begin position="1"/>
        <end position="412"/>
    </location>
</feature>
<sequence length="412" mass="45645">MAADFAASVILDTALSVSGLTDYLRLLLEHDEQLRQVWVVGEVSSTNHHRSGLFFTLQDPDGSAAIKCVVWSSQVPKLAQLPVAGEQLIVLGSIRLYPQRGEYQLSVWQAVPAGVGLQALRYQQLKNRLLAEGLFDPQRKRSLPIHPQTIAVVTSPTAAAWGDIQKTLKHRYPGLHVLFSPATVQGEQAPESIVKAIARVEKDGRAEVLILSRGGGAVEELACFNDERVVRAVAECSIPVVTGIGHQRDESLVDLVADVCVHTPTAAAEKVVPSLAELSNQHRQRIIALHQVLLHTQTSAENQLQTLRNRLQNLRLDRHLQQEAQKLNWQRQRLLQLTMGRSQQAKQHLELLRQKLISLDPKSVLQRGYAVVRQENGAIARSADELAVGNELFIQLAQGEVKAKVIEVEQRQ</sequence>
<gene>
    <name evidence="1" type="primary">xseA</name>
    <name type="ordered locus">all1774</name>
</gene>
<accession>Q8YW42</accession>